<accession>A0A0B4GN88</accession>
<gene>
    <name type="ORF">MGU_11447</name>
</gene>
<proteinExistence type="evidence at protein level"/>
<name>BTPSL_METGA</name>
<sequence>MEKQRLKAQLSSLRVPLFSVPWPGQCSNKAEVIEARMMKWADEHNLLVTDEYRNRVIRTRYGLLAARCYPNAGEVLLQAIADYLVWFFLADDLFVDRVEVATDETIRNLTAMVDVLDLNVAGSPPVFGELAWLDVCQRLRRLLQAETFERFAQGMRLWATTAALQILNHLRPTSVGIREYQTIRRHTSGMNPCASLADAANKGSVQACEFYDADVQTLVRQTNNIVCWANDIQSLRIEIHQPGQFRNIVTIYAQQGQSLQDAVETTATRVNKEIAGFCELADAVTARPISDELHGLIDGLKYWIRGYLDWVVHDTMRYADQFIESDADDRRFSAPDLSLLKKKLLVCD</sequence>
<comment type="function">
    <text evidence="2">Terpene synthase that catalyzes the conversion of (2E,6E)-farnesyl diphosphate (FPP) into sesquiterpenes which are important for fungi-environment interactions (PubMed:31239482). Produces a mixture consisting of 8 sesquiterpenes including corvol ethers A and B, as well as traces of epizonarene, gamma-cadinene, delta-cadinene, alpha-cadinene, alpha-cadinol, and an unidentified sesquiterpene (PubMed:31239482). Produces both corvol ether A and corvol ether B in similar concentrations (PubMed:31239482).</text>
</comment>
<comment type="catalytic activity">
    <reaction evidence="2">
        <text>(2E,6E)-farnesyl diphosphate + H2O = (+)-corvol ether B + diphosphate</text>
        <dbReference type="Rhea" id="RHEA:53644"/>
        <dbReference type="ChEBI" id="CHEBI:15377"/>
        <dbReference type="ChEBI" id="CHEBI:33019"/>
        <dbReference type="ChEBI" id="CHEBI:137536"/>
        <dbReference type="ChEBI" id="CHEBI:175763"/>
        <dbReference type="EC" id="4.2.3.163"/>
    </reaction>
    <physiologicalReaction direction="left-to-right" evidence="2">
        <dbReference type="Rhea" id="RHEA:53645"/>
    </physiologicalReaction>
</comment>
<comment type="catalytic activity">
    <reaction evidence="2">
        <text>(2E,6E)-farnesyl diphosphate + H2O = (+)-corvol ether A + diphosphate</text>
        <dbReference type="Rhea" id="RHEA:53648"/>
        <dbReference type="ChEBI" id="CHEBI:15377"/>
        <dbReference type="ChEBI" id="CHEBI:33019"/>
        <dbReference type="ChEBI" id="CHEBI:137535"/>
        <dbReference type="ChEBI" id="CHEBI:175763"/>
        <dbReference type="EC" id="4.2.3.171"/>
    </reaction>
    <physiologicalReaction direction="left-to-right" evidence="2">
        <dbReference type="Rhea" id="RHEA:53649"/>
    </physiologicalReaction>
</comment>
<comment type="cofactor">
    <cofactor evidence="1">
        <name>Mg(2+)</name>
        <dbReference type="ChEBI" id="CHEBI:18420"/>
    </cofactor>
    <text evidence="1">Binds 3 Mg(2+) ions per subunit.</text>
</comment>
<comment type="domain">
    <text evidence="1">The Asp-Asp-Xaa-Xaa-Xaa-Asp (DDXXXD) motif is important for the catalytic activity, presumably through binding to Mg(2+).</text>
</comment>
<comment type="similarity">
    <text evidence="4">Belongs to the terpene synthase family.</text>
</comment>
<reference key="1">
    <citation type="journal article" date="2014" name="Proc. Natl. Acad. Sci. U.S.A.">
        <title>Trajectory and genomic determinants of fungal-pathogen speciation and host adaptation.</title>
        <authorList>
            <person name="Hu X."/>
            <person name="Xiao G."/>
            <person name="Zheng P."/>
            <person name="Shang Y."/>
            <person name="Su Y."/>
            <person name="Zhang X."/>
            <person name="Liu X."/>
            <person name="Zhan S."/>
            <person name="St Leger R.J."/>
            <person name="Wang C."/>
        </authorList>
    </citation>
    <scope>NUCLEOTIDE SEQUENCE [LARGE SCALE GENOMIC DNA]</scope>
    <source>
        <strain>ARSEF 977</strain>
    </source>
</reference>
<reference key="2">
    <citation type="journal article" date="2019" name="Sci. Rep.">
        <title>Terpene synthase genes originated from bacteria through horizontal gene transfer contribute to terpenoid diversity in fungi.</title>
        <authorList>
            <person name="Jia Q."/>
            <person name="Chen X."/>
            <person name="Koellner T.G."/>
            <person name="Rinkel J."/>
            <person name="Fu J."/>
            <person name="Labbe J."/>
            <person name="Xiong W."/>
            <person name="Dickschat J.S."/>
            <person name="Gershenzon J."/>
            <person name="Chen F."/>
        </authorList>
    </citation>
    <scope>FUNCTION</scope>
    <scope>CATALYTIC ACTIVITY</scope>
</reference>
<protein>
    <recommendedName>
        <fullName evidence="3">Sesquiterpene synthase MGU_11447</fullName>
        <ecNumber evidence="2">4.2.3.163</ecNumber>
        <ecNumber evidence="2">4.2.3.171</ecNumber>
    </recommendedName>
    <alternativeName>
        <fullName evidence="3">Bacterial terpene synthase-like protein MGU_11447</fullName>
        <shortName evidence="3">BTPSL</shortName>
    </alternativeName>
</protein>
<evidence type="ECO:0000250" key="1">
    <source>
        <dbReference type="UniProtKB" id="B5HDJ6"/>
    </source>
</evidence>
<evidence type="ECO:0000269" key="2">
    <source>
    </source>
</evidence>
<evidence type="ECO:0000303" key="3">
    <source>
    </source>
</evidence>
<evidence type="ECO:0000305" key="4"/>
<organism>
    <name type="scientific">Metarhizium guizhouense (strain ARSEF 977)</name>
    <dbReference type="NCBI Taxonomy" id="1276136"/>
    <lineage>
        <taxon>Eukaryota</taxon>
        <taxon>Fungi</taxon>
        <taxon>Dikarya</taxon>
        <taxon>Ascomycota</taxon>
        <taxon>Pezizomycotina</taxon>
        <taxon>Sordariomycetes</taxon>
        <taxon>Hypocreomycetidae</taxon>
        <taxon>Hypocreales</taxon>
        <taxon>Clavicipitaceae</taxon>
        <taxon>Metarhizium</taxon>
    </lineage>
</organism>
<feature type="chain" id="PRO_0000451047" description="Sesquiterpene synthase MGU_11447">
    <location>
        <begin position="1"/>
        <end position="348"/>
    </location>
</feature>
<feature type="short sequence motif" description="DDXXXD motif" evidence="1">
    <location>
        <begin position="91"/>
        <end position="96"/>
    </location>
</feature>
<feature type="binding site" evidence="1">
    <location>
        <position position="91"/>
    </location>
    <ligand>
        <name>Mg(2+)</name>
        <dbReference type="ChEBI" id="CHEBI:18420"/>
        <label>1</label>
    </ligand>
</feature>
<feature type="binding site" evidence="1">
    <location>
        <position position="96"/>
    </location>
    <ligand>
        <name>Mg(2+)</name>
        <dbReference type="ChEBI" id="CHEBI:18420"/>
        <label>1</label>
    </ligand>
</feature>
<feature type="binding site" evidence="1">
    <location>
        <position position="96"/>
    </location>
    <ligand>
        <name>Mg(2+)</name>
        <dbReference type="ChEBI" id="CHEBI:18420"/>
        <label>2</label>
    </ligand>
</feature>
<feature type="binding site" evidence="1">
    <location>
        <position position="184"/>
    </location>
    <ligand>
        <name>substrate</name>
    </ligand>
</feature>
<feature type="binding site" evidence="1">
    <location>
        <position position="230"/>
    </location>
    <ligand>
        <name>Mg(2+)</name>
        <dbReference type="ChEBI" id="CHEBI:18420"/>
        <label>3</label>
    </ligand>
</feature>
<feature type="binding site" evidence="1">
    <location>
        <position position="234"/>
    </location>
    <ligand>
        <name>Mg(2+)</name>
        <dbReference type="ChEBI" id="CHEBI:18420"/>
        <label>3</label>
    </ligand>
</feature>
<feature type="binding site" evidence="1">
    <location>
        <position position="238"/>
    </location>
    <ligand>
        <name>Mg(2+)</name>
        <dbReference type="ChEBI" id="CHEBI:18420"/>
        <label>3</label>
    </ligand>
</feature>
<feature type="site" description="Plays a critical role in the stabilization of intermediate cation" evidence="1">
    <location>
        <position position="88"/>
    </location>
</feature>
<feature type="site" description="Plays a critical role for substrate recognition" evidence="1">
    <location>
        <position position="92"/>
    </location>
</feature>
<dbReference type="EC" id="4.2.3.163" evidence="2"/>
<dbReference type="EC" id="4.2.3.171" evidence="2"/>
<dbReference type="EMBL" id="AZNH01000187">
    <property type="protein sequence ID" value="KID81182.1"/>
    <property type="molecule type" value="Genomic_DNA"/>
</dbReference>
<dbReference type="SMR" id="A0A0B4GN88"/>
<dbReference type="HOGENOM" id="CLU_042538_4_2_1"/>
<dbReference type="OrthoDB" id="4040at5529"/>
<dbReference type="Proteomes" id="UP000031192">
    <property type="component" value="Unassembled WGS sequence"/>
</dbReference>
<dbReference type="GO" id="GO:0046872">
    <property type="term" value="F:metal ion binding"/>
    <property type="evidence" value="ECO:0007669"/>
    <property type="project" value="UniProtKB-KW"/>
</dbReference>
<dbReference type="GO" id="GO:0010333">
    <property type="term" value="F:terpene synthase activity"/>
    <property type="evidence" value="ECO:0007669"/>
    <property type="project" value="InterPro"/>
</dbReference>
<dbReference type="GO" id="GO:0008299">
    <property type="term" value="P:isoprenoid biosynthetic process"/>
    <property type="evidence" value="ECO:0007669"/>
    <property type="project" value="UniProtKB-ARBA"/>
</dbReference>
<dbReference type="Gene3D" id="1.10.600.10">
    <property type="entry name" value="Farnesyl Diphosphate Synthase"/>
    <property type="match status" value="1"/>
</dbReference>
<dbReference type="InterPro" id="IPR008949">
    <property type="entry name" value="Isoprenoid_synthase_dom_sf"/>
</dbReference>
<dbReference type="InterPro" id="IPR034686">
    <property type="entry name" value="Terpene_cyclase-like_2"/>
</dbReference>
<dbReference type="PANTHER" id="PTHR35201:SF4">
    <property type="entry name" value="BETA-PINACENE SYNTHASE-RELATED"/>
    <property type="match status" value="1"/>
</dbReference>
<dbReference type="PANTHER" id="PTHR35201">
    <property type="entry name" value="TERPENE SYNTHASE"/>
    <property type="match status" value="1"/>
</dbReference>
<dbReference type="Pfam" id="PF19086">
    <property type="entry name" value="Terpene_syn_C_2"/>
    <property type="match status" value="1"/>
</dbReference>
<dbReference type="SFLD" id="SFLDS00005">
    <property type="entry name" value="Isoprenoid_Synthase_Type_I"/>
    <property type="match status" value="1"/>
</dbReference>
<dbReference type="SFLD" id="SFLDG01020">
    <property type="entry name" value="Terpene_Cyclase_Like_2"/>
    <property type="match status" value="1"/>
</dbReference>
<dbReference type="SUPFAM" id="SSF48576">
    <property type="entry name" value="Terpenoid synthases"/>
    <property type="match status" value="1"/>
</dbReference>
<keyword id="KW-0456">Lyase</keyword>
<keyword id="KW-0460">Magnesium</keyword>
<keyword id="KW-0479">Metal-binding</keyword>